<sequence>MHLESIVLRNFRNYENLELEFSPSVNVFLGENAQGKTNLLEAVLMLALAKSHRTTNDKDFIMWEKEEAKMEGRVVKRGQTVPLELAITQKGKRAKVNHLEQKKLSQYVGNLNVVIFAPEDLSLVKGAPGVRRRFLNMEIGQMQPIYLHNLSEYQRILQQRNQYLKMLQMKRKVDPMLLDILTEQFADVAINLTKRRADFIQKLEAYAAPIHHQISRGLETLKIEYKASVTLNGDDPEVWKADLLQKMESIKQREIDRGVTLIGPHRDDSLFYINGQNVQDFGSQGQQRTTALSVKLAEIDLIHEETGEYPVLLLDDVLSELDDYRQSHLLGAIEGKVQTFVTTTSTSGIDHNTLRQATTFYVEKGTVKKS</sequence>
<keyword id="KW-0067">ATP-binding</keyword>
<keyword id="KW-0963">Cytoplasm</keyword>
<keyword id="KW-0227">DNA damage</keyword>
<keyword id="KW-0234">DNA repair</keyword>
<keyword id="KW-0235">DNA replication</keyword>
<keyword id="KW-0238">DNA-binding</keyword>
<keyword id="KW-0547">Nucleotide-binding</keyword>
<keyword id="KW-0742">SOS response</keyword>
<organism>
    <name type="scientific">Listeria innocua serovar 6a (strain ATCC BAA-680 / CLIP 11262)</name>
    <dbReference type="NCBI Taxonomy" id="272626"/>
    <lineage>
        <taxon>Bacteria</taxon>
        <taxon>Bacillati</taxon>
        <taxon>Bacillota</taxon>
        <taxon>Bacilli</taxon>
        <taxon>Bacillales</taxon>
        <taxon>Listeriaceae</taxon>
        <taxon>Listeria</taxon>
    </lineage>
</organism>
<proteinExistence type="inferred from homology"/>
<comment type="function">
    <text evidence="1">The RecF protein is involved in DNA metabolism; it is required for DNA replication and normal SOS inducibility. RecF binds preferentially to single-stranded, linear DNA. It also seems to bind ATP.</text>
</comment>
<comment type="subcellular location">
    <subcellularLocation>
        <location evidence="1">Cytoplasm</location>
    </subcellularLocation>
</comment>
<comment type="similarity">
    <text evidence="1">Belongs to the RecF family.</text>
</comment>
<name>RECF_LISIN</name>
<dbReference type="EMBL" id="AL596163">
    <property type="protein sequence ID" value="CAC95238.1"/>
    <property type="molecule type" value="Genomic_DNA"/>
</dbReference>
<dbReference type="PIR" id="AF1433">
    <property type="entry name" value="AF1433"/>
</dbReference>
<dbReference type="RefSeq" id="WP_010990153.1">
    <property type="nucleotide sequence ID" value="NC_003212.1"/>
</dbReference>
<dbReference type="SMR" id="Q92FU8"/>
<dbReference type="STRING" id="272626.gene:17564316"/>
<dbReference type="GeneID" id="93233498"/>
<dbReference type="KEGG" id="lin:RecF"/>
<dbReference type="eggNOG" id="COG1195">
    <property type="taxonomic scope" value="Bacteria"/>
</dbReference>
<dbReference type="HOGENOM" id="CLU_040267_0_1_9"/>
<dbReference type="OrthoDB" id="9803889at2"/>
<dbReference type="Proteomes" id="UP000002513">
    <property type="component" value="Chromosome"/>
</dbReference>
<dbReference type="GO" id="GO:0005737">
    <property type="term" value="C:cytoplasm"/>
    <property type="evidence" value="ECO:0007669"/>
    <property type="project" value="UniProtKB-SubCell"/>
</dbReference>
<dbReference type="GO" id="GO:0005524">
    <property type="term" value="F:ATP binding"/>
    <property type="evidence" value="ECO:0007669"/>
    <property type="project" value="UniProtKB-UniRule"/>
</dbReference>
<dbReference type="GO" id="GO:0003697">
    <property type="term" value="F:single-stranded DNA binding"/>
    <property type="evidence" value="ECO:0007669"/>
    <property type="project" value="UniProtKB-UniRule"/>
</dbReference>
<dbReference type="GO" id="GO:0006260">
    <property type="term" value="P:DNA replication"/>
    <property type="evidence" value="ECO:0007669"/>
    <property type="project" value="UniProtKB-UniRule"/>
</dbReference>
<dbReference type="GO" id="GO:0000731">
    <property type="term" value="P:DNA synthesis involved in DNA repair"/>
    <property type="evidence" value="ECO:0007669"/>
    <property type="project" value="TreeGrafter"/>
</dbReference>
<dbReference type="GO" id="GO:0006302">
    <property type="term" value="P:double-strand break repair"/>
    <property type="evidence" value="ECO:0007669"/>
    <property type="project" value="TreeGrafter"/>
</dbReference>
<dbReference type="GO" id="GO:0009432">
    <property type="term" value="P:SOS response"/>
    <property type="evidence" value="ECO:0007669"/>
    <property type="project" value="UniProtKB-UniRule"/>
</dbReference>
<dbReference type="CDD" id="cd03242">
    <property type="entry name" value="ABC_RecF"/>
    <property type="match status" value="1"/>
</dbReference>
<dbReference type="FunFam" id="1.20.1050.90:FF:000002">
    <property type="entry name" value="DNA replication and repair protein RecF"/>
    <property type="match status" value="1"/>
</dbReference>
<dbReference type="Gene3D" id="3.40.50.300">
    <property type="entry name" value="P-loop containing nucleotide triphosphate hydrolases"/>
    <property type="match status" value="1"/>
</dbReference>
<dbReference type="Gene3D" id="1.20.1050.90">
    <property type="entry name" value="RecF/RecN/SMC, N-terminal domain"/>
    <property type="match status" value="1"/>
</dbReference>
<dbReference type="HAMAP" id="MF_00365">
    <property type="entry name" value="RecF"/>
    <property type="match status" value="1"/>
</dbReference>
<dbReference type="InterPro" id="IPR001238">
    <property type="entry name" value="DNA-binding_RecF"/>
</dbReference>
<dbReference type="InterPro" id="IPR018078">
    <property type="entry name" value="DNA-binding_RecF_CS"/>
</dbReference>
<dbReference type="InterPro" id="IPR027417">
    <property type="entry name" value="P-loop_NTPase"/>
</dbReference>
<dbReference type="InterPro" id="IPR003395">
    <property type="entry name" value="RecF/RecN/SMC_N"/>
</dbReference>
<dbReference type="InterPro" id="IPR042174">
    <property type="entry name" value="RecF_2"/>
</dbReference>
<dbReference type="NCBIfam" id="TIGR00611">
    <property type="entry name" value="recf"/>
    <property type="match status" value="1"/>
</dbReference>
<dbReference type="PANTHER" id="PTHR32182">
    <property type="entry name" value="DNA REPLICATION AND REPAIR PROTEIN RECF"/>
    <property type="match status" value="1"/>
</dbReference>
<dbReference type="PANTHER" id="PTHR32182:SF0">
    <property type="entry name" value="DNA REPLICATION AND REPAIR PROTEIN RECF"/>
    <property type="match status" value="1"/>
</dbReference>
<dbReference type="Pfam" id="PF02463">
    <property type="entry name" value="SMC_N"/>
    <property type="match status" value="1"/>
</dbReference>
<dbReference type="SUPFAM" id="SSF52540">
    <property type="entry name" value="P-loop containing nucleoside triphosphate hydrolases"/>
    <property type="match status" value="1"/>
</dbReference>
<dbReference type="PROSITE" id="PS00617">
    <property type="entry name" value="RECF_1"/>
    <property type="match status" value="1"/>
</dbReference>
<dbReference type="PROSITE" id="PS00618">
    <property type="entry name" value="RECF_2"/>
    <property type="match status" value="1"/>
</dbReference>
<reference key="1">
    <citation type="journal article" date="2001" name="Science">
        <title>Comparative genomics of Listeria species.</title>
        <authorList>
            <person name="Glaser P."/>
            <person name="Frangeul L."/>
            <person name="Buchrieser C."/>
            <person name="Rusniok C."/>
            <person name="Amend A."/>
            <person name="Baquero F."/>
            <person name="Berche P."/>
            <person name="Bloecker H."/>
            <person name="Brandt P."/>
            <person name="Chakraborty T."/>
            <person name="Charbit A."/>
            <person name="Chetouani F."/>
            <person name="Couve E."/>
            <person name="de Daruvar A."/>
            <person name="Dehoux P."/>
            <person name="Domann E."/>
            <person name="Dominguez-Bernal G."/>
            <person name="Duchaud E."/>
            <person name="Durant L."/>
            <person name="Dussurget O."/>
            <person name="Entian K.-D."/>
            <person name="Fsihi H."/>
            <person name="Garcia-del Portillo F."/>
            <person name="Garrido P."/>
            <person name="Gautier L."/>
            <person name="Goebel W."/>
            <person name="Gomez-Lopez N."/>
            <person name="Hain T."/>
            <person name="Hauf J."/>
            <person name="Jackson D."/>
            <person name="Jones L.-M."/>
            <person name="Kaerst U."/>
            <person name="Kreft J."/>
            <person name="Kuhn M."/>
            <person name="Kunst F."/>
            <person name="Kurapkat G."/>
            <person name="Madueno E."/>
            <person name="Maitournam A."/>
            <person name="Mata Vicente J."/>
            <person name="Ng E."/>
            <person name="Nedjari H."/>
            <person name="Nordsiek G."/>
            <person name="Novella S."/>
            <person name="de Pablos B."/>
            <person name="Perez-Diaz J.-C."/>
            <person name="Purcell R."/>
            <person name="Remmel B."/>
            <person name="Rose M."/>
            <person name="Schlueter T."/>
            <person name="Simoes N."/>
            <person name="Tierrez A."/>
            <person name="Vazquez-Boland J.-A."/>
            <person name="Voss H."/>
            <person name="Wehland J."/>
            <person name="Cossart P."/>
        </authorList>
    </citation>
    <scope>NUCLEOTIDE SEQUENCE [LARGE SCALE GENOMIC DNA]</scope>
    <source>
        <strain>ATCC BAA-680 / CLIP 11262</strain>
    </source>
</reference>
<evidence type="ECO:0000255" key="1">
    <source>
        <dbReference type="HAMAP-Rule" id="MF_00365"/>
    </source>
</evidence>
<accession>Q92FU8</accession>
<feature type="chain" id="PRO_0000196428" description="DNA replication and repair protein RecF">
    <location>
        <begin position="1"/>
        <end position="370"/>
    </location>
</feature>
<feature type="binding site" evidence="1">
    <location>
        <begin position="30"/>
        <end position="37"/>
    </location>
    <ligand>
        <name>ATP</name>
        <dbReference type="ChEBI" id="CHEBI:30616"/>
    </ligand>
</feature>
<gene>
    <name evidence="1" type="primary">recF</name>
    <name type="ordered locus">lin0005</name>
</gene>
<protein>
    <recommendedName>
        <fullName evidence="1">DNA replication and repair protein RecF</fullName>
    </recommendedName>
</protein>